<evidence type="ECO:0000255" key="1">
    <source>
        <dbReference type="HAMAP-Rule" id="MF_00251"/>
    </source>
</evidence>
<evidence type="ECO:0000305" key="2"/>
<organism>
    <name type="scientific">Mycobacterium ulcerans (strain Agy99)</name>
    <dbReference type="NCBI Taxonomy" id="362242"/>
    <lineage>
        <taxon>Bacteria</taxon>
        <taxon>Bacillati</taxon>
        <taxon>Actinomycetota</taxon>
        <taxon>Actinomycetes</taxon>
        <taxon>Mycobacteriales</taxon>
        <taxon>Mycobacteriaceae</taxon>
        <taxon>Mycobacterium</taxon>
        <taxon>Mycobacterium ulcerans group</taxon>
    </lineage>
</organism>
<name>RL36_MYCUA</name>
<reference key="1">
    <citation type="journal article" date="2007" name="Genome Res.">
        <title>Reductive evolution and niche adaptation inferred from the genome of Mycobacterium ulcerans, the causative agent of Buruli ulcer.</title>
        <authorList>
            <person name="Stinear T.P."/>
            <person name="Seemann T."/>
            <person name="Pidot S."/>
            <person name="Frigui W."/>
            <person name="Reysset G."/>
            <person name="Garnier T."/>
            <person name="Meurice G."/>
            <person name="Simon D."/>
            <person name="Bouchier C."/>
            <person name="Ma L."/>
            <person name="Tichit M."/>
            <person name="Porter J.L."/>
            <person name="Ryan J."/>
            <person name="Johnson P.D.R."/>
            <person name="Davies J.K."/>
            <person name="Jenkin G.A."/>
            <person name="Small P.L.C."/>
            <person name="Jones L.M."/>
            <person name="Tekaia F."/>
            <person name="Laval F."/>
            <person name="Daffe M."/>
            <person name="Parkhill J."/>
            <person name="Cole S.T."/>
        </authorList>
    </citation>
    <scope>NUCLEOTIDE SEQUENCE [LARGE SCALE GENOMIC DNA]</scope>
    <source>
        <strain>Agy99</strain>
    </source>
</reference>
<accession>A0PMB3</accession>
<dbReference type="EMBL" id="CP000325">
    <property type="protein sequence ID" value="ABL03482.1"/>
    <property type="molecule type" value="Genomic_DNA"/>
</dbReference>
<dbReference type="RefSeq" id="WP_003879483.1">
    <property type="nucleotide sequence ID" value="NC_008611.1"/>
</dbReference>
<dbReference type="SMR" id="A0PMB3"/>
<dbReference type="GeneID" id="98799388"/>
<dbReference type="KEGG" id="mul:MUL_0844"/>
<dbReference type="eggNOG" id="COG0257">
    <property type="taxonomic scope" value="Bacteria"/>
</dbReference>
<dbReference type="HOGENOM" id="CLU_135723_6_2_11"/>
<dbReference type="Proteomes" id="UP000000765">
    <property type="component" value="Chromosome"/>
</dbReference>
<dbReference type="GO" id="GO:0005737">
    <property type="term" value="C:cytoplasm"/>
    <property type="evidence" value="ECO:0007669"/>
    <property type="project" value="UniProtKB-ARBA"/>
</dbReference>
<dbReference type="GO" id="GO:1990904">
    <property type="term" value="C:ribonucleoprotein complex"/>
    <property type="evidence" value="ECO:0007669"/>
    <property type="project" value="UniProtKB-KW"/>
</dbReference>
<dbReference type="GO" id="GO:0005840">
    <property type="term" value="C:ribosome"/>
    <property type="evidence" value="ECO:0007669"/>
    <property type="project" value="UniProtKB-KW"/>
</dbReference>
<dbReference type="GO" id="GO:0003735">
    <property type="term" value="F:structural constituent of ribosome"/>
    <property type="evidence" value="ECO:0007669"/>
    <property type="project" value="InterPro"/>
</dbReference>
<dbReference type="GO" id="GO:0006412">
    <property type="term" value="P:translation"/>
    <property type="evidence" value="ECO:0007669"/>
    <property type="project" value="UniProtKB-UniRule"/>
</dbReference>
<dbReference type="HAMAP" id="MF_00251">
    <property type="entry name" value="Ribosomal_bL36"/>
    <property type="match status" value="1"/>
</dbReference>
<dbReference type="InterPro" id="IPR000473">
    <property type="entry name" value="Ribosomal_bL36"/>
</dbReference>
<dbReference type="InterPro" id="IPR035977">
    <property type="entry name" value="Ribosomal_bL36_sp"/>
</dbReference>
<dbReference type="NCBIfam" id="TIGR01022">
    <property type="entry name" value="rpmJ_bact"/>
    <property type="match status" value="1"/>
</dbReference>
<dbReference type="PANTHER" id="PTHR42888">
    <property type="entry name" value="50S RIBOSOMAL PROTEIN L36, CHLOROPLASTIC"/>
    <property type="match status" value="1"/>
</dbReference>
<dbReference type="PANTHER" id="PTHR42888:SF1">
    <property type="entry name" value="LARGE RIBOSOMAL SUBUNIT PROTEIN BL36C"/>
    <property type="match status" value="1"/>
</dbReference>
<dbReference type="Pfam" id="PF00444">
    <property type="entry name" value="Ribosomal_L36"/>
    <property type="match status" value="1"/>
</dbReference>
<dbReference type="SUPFAM" id="SSF57840">
    <property type="entry name" value="Ribosomal protein L36"/>
    <property type="match status" value="1"/>
</dbReference>
<dbReference type="PROSITE" id="PS00828">
    <property type="entry name" value="RIBOSOMAL_L36"/>
    <property type="match status" value="1"/>
</dbReference>
<proteinExistence type="inferred from homology"/>
<gene>
    <name evidence="1" type="primary">rpmJ</name>
    <name type="ordered locus">MUL_0844</name>
</gene>
<sequence>MKVNPSVKPICDKCRVIRRHGRVMVICSDPRHKQRQG</sequence>
<feature type="chain" id="PRO_0000302248" description="Large ribosomal subunit protein bL36">
    <location>
        <begin position="1"/>
        <end position="37"/>
    </location>
</feature>
<protein>
    <recommendedName>
        <fullName evidence="1">Large ribosomal subunit protein bL36</fullName>
    </recommendedName>
    <alternativeName>
        <fullName evidence="2">50S ribosomal protein L36</fullName>
    </alternativeName>
</protein>
<comment type="similarity">
    <text evidence="1">Belongs to the bacterial ribosomal protein bL36 family.</text>
</comment>
<keyword id="KW-0687">Ribonucleoprotein</keyword>
<keyword id="KW-0689">Ribosomal protein</keyword>